<proteinExistence type="evidence at protein level"/>
<comment type="function">
    <text evidence="1">DNA-dependent RNA polymerase (RNAP) catalyzes the transcription of DNA into RNA using the four ribonucleoside triphosphates as substrates.</text>
</comment>
<comment type="catalytic activity">
    <reaction evidence="1">
        <text>RNA(n) + a ribonucleoside 5'-triphosphate = RNA(n+1) + diphosphate</text>
        <dbReference type="Rhea" id="RHEA:21248"/>
        <dbReference type="Rhea" id="RHEA-COMP:14527"/>
        <dbReference type="Rhea" id="RHEA-COMP:17342"/>
        <dbReference type="ChEBI" id="CHEBI:33019"/>
        <dbReference type="ChEBI" id="CHEBI:61557"/>
        <dbReference type="ChEBI" id="CHEBI:140395"/>
        <dbReference type="EC" id="2.7.7.6"/>
    </reaction>
</comment>
<comment type="subunit">
    <text evidence="2">Part of the 13-subunit RNA polymerase complex.</text>
</comment>
<comment type="interaction">
    <interactant intactId="EBI-9022031">
        <id>Q980K0</id>
    </interactant>
    <interactant intactId="EBI-9022065">
        <id>P95989</id>
        <label>rpo3</label>
    </interactant>
    <organismsDiffer>false</organismsDiffer>
    <experiments>2</experiments>
</comment>
<comment type="subcellular location">
    <subcellularLocation>
        <location evidence="1">Cytoplasm</location>
    </subcellularLocation>
</comment>
<comment type="similarity">
    <text evidence="1">Belongs to the archaeal Rpo11/eukaryotic RPB11/RPC19 RNA polymerase subunit family.</text>
</comment>
<keyword id="KW-0002">3D-structure</keyword>
<keyword id="KW-0963">Cytoplasm</keyword>
<keyword id="KW-0240">DNA-directed RNA polymerase</keyword>
<keyword id="KW-0548">Nucleotidyltransferase</keyword>
<keyword id="KW-1185">Reference proteome</keyword>
<keyword id="KW-0804">Transcription</keyword>
<keyword id="KW-0808">Transferase</keyword>
<protein>
    <recommendedName>
        <fullName evidence="1">DNA-directed RNA polymerase subunit Rpo11</fullName>
        <ecNumber evidence="1">2.7.7.6</ecNumber>
    </recommendedName>
    <alternativeName>
        <fullName evidence="1 4">DNA-directed RNA polymerase subunit L</fullName>
    </alternativeName>
</protein>
<organism>
    <name type="scientific">Saccharolobus solfataricus (strain ATCC 35092 / DSM 1617 / JCM 11322 / P2)</name>
    <name type="common">Sulfolobus solfataricus</name>
    <dbReference type="NCBI Taxonomy" id="273057"/>
    <lineage>
        <taxon>Archaea</taxon>
        <taxon>Thermoproteota</taxon>
        <taxon>Thermoprotei</taxon>
        <taxon>Sulfolobales</taxon>
        <taxon>Sulfolobaceae</taxon>
        <taxon>Saccharolobus</taxon>
    </lineage>
</organism>
<dbReference type="EC" id="2.7.7.6" evidence="1"/>
<dbReference type="EMBL" id="AE006641">
    <property type="protein sequence ID" value="AAK40631.1"/>
    <property type="molecule type" value="Genomic_DNA"/>
</dbReference>
<dbReference type="PIR" id="H90171">
    <property type="entry name" value="H90171"/>
</dbReference>
<dbReference type="RefSeq" id="WP_009990580.1">
    <property type="nucleotide sequence ID" value="NC_002754.1"/>
</dbReference>
<dbReference type="PDB" id="2PA8">
    <property type="method" value="X-ray"/>
    <property type="resolution" value="1.76 A"/>
    <property type="chains" value="L=1-92"/>
</dbReference>
<dbReference type="PDB" id="2PMZ">
    <property type="method" value="X-ray"/>
    <property type="resolution" value="3.40 A"/>
    <property type="chains" value="L/X=1-92"/>
</dbReference>
<dbReference type="PDB" id="3HKZ">
    <property type="method" value="X-ray"/>
    <property type="resolution" value="3.40 A"/>
    <property type="chains" value="L/V=1-92"/>
</dbReference>
<dbReference type="PDBsum" id="2PA8"/>
<dbReference type="PDBsum" id="2PMZ"/>
<dbReference type="PDBsum" id="3HKZ"/>
<dbReference type="SMR" id="Q980K0"/>
<dbReference type="DIP" id="DIP-60647N"/>
<dbReference type="FunCoup" id="Q980K0">
    <property type="interactions" value="134"/>
</dbReference>
<dbReference type="IntAct" id="Q980K0">
    <property type="interactions" value="2"/>
</dbReference>
<dbReference type="STRING" id="273057.SSO5577"/>
<dbReference type="PaxDb" id="273057-SSO5577"/>
<dbReference type="EnsemblBacteria" id="AAK40631">
    <property type="protein sequence ID" value="AAK40631"/>
    <property type="gene ID" value="SSO5577"/>
</dbReference>
<dbReference type="KEGG" id="sso:SSO5577"/>
<dbReference type="PATRIC" id="fig|273057.12.peg.286"/>
<dbReference type="eggNOG" id="arCOG04111">
    <property type="taxonomic scope" value="Archaea"/>
</dbReference>
<dbReference type="HOGENOM" id="CLU_090381_5_1_2"/>
<dbReference type="InParanoid" id="Q980K0"/>
<dbReference type="PhylomeDB" id="Q980K0"/>
<dbReference type="BRENDA" id="2.7.7.6">
    <property type="organism ID" value="6163"/>
</dbReference>
<dbReference type="EvolutionaryTrace" id="Q980K0"/>
<dbReference type="Proteomes" id="UP000001974">
    <property type="component" value="Chromosome"/>
</dbReference>
<dbReference type="GO" id="GO:0005737">
    <property type="term" value="C:cytoplasm"/>
    <property type="evidence" value="ECO:0007669"/>
    <property type="project" value="UniProtKB-SubCell"/>
</dbReference>
<dbReference type="GO" id="GO:0000428">
    <property type="term" value="C:DNA-directed RNA polymerase complex"/>
    <property type="evidence" value="ECO:0000314"/>
    <property type="project" value="UniProtKB"/>
</dbReference>
<dbReference type="GO" id="GO:0003677">
    <property type="term" value="F:DNA binding"/>
    <property type="evidence" value="ECO:0007669"/>
    <property type="project" value="InterPro"/>
</dbReference>
<dbReference type="GO" id="GO:0003899">
    <property type="term" value="F:DNA-directed RNA polymerase activity"/>
    <property type="evidence" value="ECO:0007669"/>
    <property type="project" value="UniProtKB-UniRule"/>
</dbReference>
<dbReference type="GO" id="GO:0046983">
    <property type="term" value="F:protein dimerization activity"/>
    <property type="evidence" value="ECO:0007669"/>
    <property type="project" value="InterPro"/>
</dbReference>
<dbReference type="GO" id="GO:0006351">
    <property type="term" value="P:DNA-templated transcription"/>
    <property type="evidence" value="ECO:0007669"/>
    <property type="project" value="UniProtKB-UniRule"/>
</dbReference>
<dbReference type="CDD" id="cd07027">
    <property type="entry name" value="RNAP_RPB11_like"/>
    <property type="match status" value="1"/>
</dbReference>
<dbReference type="Gene3D" id="3.30.1360.10">
    <property type="entry name" value="RNA polymerase, RBP11-like subunit"/>
    <property type="match status" value="1"/>
</dbReference>
<dbReference type="HAMAP" id="MF_00261">
    <property type="entry name" value="RNApol_arch_Rpo11"/>
    <property type="match status" value="1"/>
</dbReference>
<dbReference type="InterPro" id="IPR036603">
    <property type="entry name" value="RBP11-like"/>
</dbReference>
<dbReference type="InterPro" id="IPR009025">
    <property type="entry name" value="RBP11-like_dimer"/>
</dbReference>
<dbReference type="InterPro" id="IPR008193">
    <property type="entry name" value="RNA_pol_Rpb11_13-16kDa_CS"/>
</dbReference>
<dbReference type="InterPro" id="IPR022905">
    <property type="entry name" value="Rpo11-like"/>
</dbReference>
<dbReference type="NCBIfam" id="NF002233">
    <property type="entry name" value="PRK01146.1-1"/>
    <property type="match status" value="1"/>
</dbReference>
<dbReference type="PANTHER" id="PTHR13946">
    <property type="entry name" value="DNA-DIRECTED RNA POLYMERASE I,II,III"/>
    <property type="match status" value="1"/>
</dbReference>
<dbReference type="PANTHER" id="PTHR13946:SF28">
    <property type="entry name" value="DNA-DIRECTED RNA POLYMERASES I AND III SUBUNIT RPAC2"/>
    <property type="match status" value="1"/>
</dbReference>
<dbReference type="Pfam" id="PF13656">
    <property type="entry name" value="RNA_pol_L_2"/>
    <property type="match status" value="1"/>
</dbReference>
<dbReference type="SUPFAM" id="SSF55257">
    <property type="entry name" value="RBP11-like subunits of RNA polymerase"/>
    <property type="match status" value="1"/>
</dbReference>
<dbReference type="PROSITE" id="PS01154">
    <property type="entry name" value="RNA_POL_L_13KD"/>
    <property type="match status" value="1"/>
</dbReference>
<gene>
    <name evidence="1" type="primary">rpo11</name>
    <name evidence="1 3" type="synonym">rpoL</name>
    <name type="ordered locus">SSO5577</name>
</gene>
<name>RPO11_SACS2</name>
<feature type="chain" id="PRO_0000149339" description="DNA-directed RNA polymerase subunit Rpo11">
    <location>
        <begin position="1"/>
        <end position="92"/>
    </location>
</feature>
<feature type="strand" evidence="8">
    <location>
        <begin position="2"/>
        <end position="9"/>
    </location>
</feature>
<feature type="strand" evidence="8">
    <location>
        <begin position="12"/>
        <end position="18"/>
    </location>
</feature>
<feature type="helix" evidence="8">
    <location>
        <begin position="22"/>
        <end position="33"/>
    </location>
</feature>
<feature type="strand" evidence="8">
    <location>
        <begin position="38"/>
        <end position="44"/>
    </location>
</feature>
<feature type="strand" evidence="9">
    <location>
        <begin position="48"/>
        <end position="50"/>
    </location>
</feature>
<feature type="strand" evidence="8">
    <location>
        <begin position="53"/>
        <end position="59"/>
    </location>
</feature>
<feature type="strand" evidence="8">
    <location>
        <begin position="61"/>
        <end position="63"/>
    </location>
</feature>
<feature type="helix" evidence="8">
    <location>
        <begin position="65"/>
        <end position="91"/>
    </location>
</feature>
<reference key="1">
    <citation type="journal article" date="2001" name="Proc. Natl. Acad. Sci. U.S.A.">
        <title>The complete genome of the crenarchaeon Sulfolobus solfataricus P2.</title>
        <authorList>
            <person name="She Q."/>
            <person name="Singh R.K."/>
            <person name="Confalonieri F."/>
            <person name="Zivanovic Y."/>
            <person name="Allard G."/>
            <person name="Awayez M.J."/>
            <person name="Chan-Weiher C.C.-Y."/>
            <person name="Clausen I.G."/>
            <person name="Curtis B.A."/>
            <person name="De Moors A."/>
            <person name="Erauso G."/>
            <person name="Fletcher C."/>
            <person name="Gordon P.M.K."/>
            <person name="Heikamp-de Jong I."/>
            <person name="Jeffries A.C."/>
            <person name="Kozera C.J."/>
            <person name="Medina N."/>
            <person name="Peng X."/>
            <person name="Thi-Ngoc H.P."/>
            <person name="Redder P."/>
            <person name="Schenk M.E."/>
            <person name="Theriault C."/>
            <person name="Tolstrup N."/>
            <person name="Charlebois R.L."/>
            <person name="Doolittle W.F."/>
            <person name="Duguet M."/>
            <person name="Gaasterland T."/>
            <person name="Garrett R.A."/>
            <person name="Ragan M.A."/>
            <person name="Sensen C.W."/>
            <person name="Van der Oost J."/>
        </authorList>
    </citation>
    <scope>NUCLEOTIDE SEQUENCE [LARGE SCALE GENOMIC DNA]</scope>
    <source>
        <strain>ATCC 35092 / DSM 1617 / JCM 11322 / P2</strain>
    </source>
</reference>
<reference evidence="5 6 7" key="2">
    <citation type="journal article" date="2008" name="Nature">
        <title>The X-ray crystal structure of RNA polymerase from Archaea.</title>
        <authorList>
            <person name="Hirata A."/>
            <person name="Klein B.J."/>
            <person name="Murakami K.S."/>
        </authorList>
    </citation>
    <scope>X-RAY CRYSTALLOGRAPHY (3.40 ANGSTROMS) OF THE RNA POLYMERASE COMPLEX</scope>
    <scope>X-RAY CRYSTALLOGRAPHY (1.76 ANGSTROMS) IN COMPLEX WITH RPO3</scope>
    <scope>SUBUNIT</scope>
    <source>
        <strain>ATCC 35092 / DSM 1617 / JCM 11322 / P2</strain>
    </source>
</reference>
<sequence length="92" mass="10285">MEIRILKSESNYLELEIEGEDHTLGNLIAGTLRRISGVSFASYYQPHPLSDKIIVKILTDGSITPKDALLKAIENIRGMTSHYIDEIKGLTK</sequence>
<accession>Q980K0</accession>
<evidence type="ECO:0000255" key="1">
    <source>
        <dbReference type="HAMAP-Rule" id="MF_00261"/>
    </source>
</evidence>
<evidence type="ECO:0000269" key="2">
    <source>
    </source>
</evidence>
<evidence type="ECO:0000303" key="3">
    <source>
    </source>
</evidence>
<evidence type="ECO:0000303" key="4">
    <source>
    </source>
</evidence>
<evidence type="ECO:0007744" key="5">
    <source>
        <dbReference type="PDB" id="2PA8"/>
    </source>
</evidence>
<evidence type="ECO:0007744" key="6">
    <source>
        <dbReference type="PDB" id="2PMZ"/>
    </source>
</evidence>
<evidence type="ECO:0007744" key="7">
    <source>
        <dbReference type="PDB" id="3HKZ"/>
    </source>
</evidence>
<evidence type="ECO:0007829" key="8">
    <source>
        <dbReference type="PDB" id="2PA8"/>
    </source>
</evidence>
<evidence type="ECO:0007829" key="9">
    <source>
        <dbReference type="PDB" id="2PMZ"/>
    </source>
</evidence>